<proteinExistence type="inferred from homology"/>
<accession>O81755</accession>
<accession>F4JJV1</accession>
<keyword id="KW-0106">Calcium</keyword>
<keyword id="KW-1015">Disulfide bond</keyword>
<keyword id="KW-0325">Glycoprotein</keyword>
<keyword id="KW-0349">Heme</keyword>
<keyword id="KW-0376">Hydrogen peroxide</keyword>
<keyword id="KW-0408">Iron</keyword>
<keyword id="KW-0479">Metal-binding</keyword>
<keyword id="KW-0560">Oxidoreductase</keyword>
<keyword id="KW-0575">Peroxidase</keyword>
<keyword id="KW-1185">Reference proteome</keyword>
<keyword id="KW-0964">Secreted</keyword>
<keyword id="KW-0732">Signal</keyword>
<gene>
    <name type="primary">PER48</name>
    <name type="synonym">P48</name>
    <name type="ordered locus">At4g33870</name>
    <name type="ORF">F17I5.60</name>
</gene>
<feature type="signal peptide" evidence="1">
    <location>
        <begin position="1"/>
        <end position="18"/>
    </location>
</feature>
<feature type="chain" id="PRO_0000055600" description="Putative Peroxidase 48">
    <location>
        <begin position="19"/>
        <end position="404"/>
    </location>
</feature>
<feature type="region of interest" description="Disordered" evidence="4">
    <location>
        <begin position="276"/>
        <end position="307"/>
    </location>
</feature>
<feature type="compositionally biased region" description="Pro residues" evidence="4">
    <location>
        <begin position="283"/>
        <end position="294"/>
    </location>
</feature>
<feature type="compositionally biased region" description="Polar residues" evidence="4">
    <location>
        <begin position="296"/>
        <end position="307"/>
    </location>
</feature>
<feature type="active site" description="Proton acceptor" evidence="2 3">
    <location>
        <position position="108"/>
    </location>
</feature>
<feature type="binding site" evidence="2">
    <location>
        <position position="109"/>
    </location>
    <ligand>
        <name>Ca(2+)</name>
        <dbReference type="ChEBI" id="CHEBI:29108"/>
        <label>1</label>
    </ligand>
</feature>
<feature type="binding site" evidence="2">
    <location>
        <position position="112"/>
    </location>
    <ligand>
        <name>Ca(2+)</name>
        <dbReference type="ChEBI" id="CHEBI:29108"/>
        <label>1</label>
    </ligand>
</feature>
<feature type="binding site" evidence="2">
    <location>
        <position position="114"/>
    </location>
    <ligand>
        <name>Ca(2+)</name>
        <dbReference type="ChEBI" id="CHEBI:29108"/>
        <label>1</label>
    </ligand>
</feature>
<feature type="binding site" evidence="2">
    <location>
        <position position="116"/>
    </location>
    <ligand>
        <name>Ca(2+)</name>
        <dbReference type="ChEBI" id="CHEBI:29108"/>
        <label>1</label>
    </ligand>
</feature>
<feature type="binding site" evidence="2">
    <location>
        <position position="118"/>
    </location>
    <ligand>
        <name>Ca(2+)</name>
        <dbReference type="ChEBI" id="CHEBI:29108"/>
        <label>1</label>
    </ligand>
</feature>
<feature type="binding site" evidence="2">
    <location>
        <position position="204"/>
    </location>
    <ligand>
        <name>substrate</name>
    </ligand>
</feature>
<feature type="binding site" description="axial binding residue" evidence="2">
    <location>
        <position position="234"/>
    </location>
    <ligand>
        <name>heme b</name>
        <dbReference type="ChEBI" id="CHEBI:60344"/>
    </ligand>
    <ligandPart>
        <name>Fe</name>
        <dbReference type="ChEBI" id="CHEBI:18248"/>
    </ligandPart>
</feature>
<feature type="binding site" evidence="2">
    <location>
        <position position="235"/>
    </location>
    <ligand>
        <name>Ca(2+)</name>
        <dbReference type="ChEBI" id="CHEBI:29108"/>
        <label>2</label>
    </ligand>
</feature>
<feature type="binding site" evidence="2">
    <location>
        <position position="287"/>
    </location>
    <ligand>
        <name>Ca(2+)</name>
        <dbReference type="ChEBI" id="CHEBI:29108"/>
        <label>2</label>
    </ligand>
</feature>
<feature type="site" description="Transition state stabilizer" evidence="2">
    <location>
        <position position="104"/>
    </location>
</feature>
<feature type="glycosylation site" description="N-linked (GlcNAc...) asparagine" evidence="1">
    <location>
        <position position="136"/>
    </location>
</feature>
<feature type="glycosylation site" description="N-linked (GlcNAc...) asparagine" evidence="1">
    <location>
        <position position="250"/>
    </location>
</feature>
<feature type="disulfide bond" evidence="2">
    <location>
        <begin position="77"/>
        <end position="156"/>
    </location>
</feature>
<feature type="disulfide bond" evidence="2">
    <location>
        <begin position="110"/>
        <end position="115"/>
    </location>
</feature>
<feature type="disulfide bond" evidence="2">
    <location>
        <begin position="162"/>
        <end position="397"/>
    </location>
</feature>
<feature type="disulfide bond" evidence="2">
    <location>
        <begin position="241"/>
        <end position="273"/>
    </location>
</feature>
<evidence type="ECO:0000255" key="1"/>
<evidence type="ECO:0000255" key="2">
    <source>
        <dbReference type="PROSITE-ProRule" id="PRU00297"/>
    </source>
</evidence>
<evidence type="ECO:0000255" key="3">
    <source>
        <dbReference type="PROSITE-ProRule" id="PRU10012"/>
    </source>
</evidence>
<evidence type="ECO:0000256" key="4">
    <source>
        <dbReference type="SAM" id="MobiDB-lite"/>
    </source>
</evidence>
<evidence type="ECO:0000305" key="5"/>
<sequence>MRFLGDYKFALLTCSVIALSIYFAINVEFRFAYDSPGTRTGVKVSEKSPFDDEFMYMSIAEDIDRSYLHYDYYRESCPTAEKIIAKAIRDIYNVTPSVAPPIIRLLFHDCFIEGCDASVLLDADEAHTSEKDASPNLSLKGFDVIDAVKSELENVCPGVVSCADLLVLAAREAVLVAGGPFYPLETGRKDSAAAYRDFAEHELPAPDATLSVILQRFSFRGFNERETVSLFGAHSIGITHCTFFKNRLYNFSATGKPDPELNPGFLQELKTKCPFSVSTSSPSAPPDIGLPPSLPASDSENSYGMSSGNRNDEVIDLSYNNEGGDENFGTRYFRRLMQNKGLMSSDQQLMGSEVTEMWVRAYASDPLLFRREFAMSMMKLSSYNVLTGPLGQVRTSCSKALPRN</sequence>
<dbReference type="EC" id="1.11.1.7"/>
<dbReference type="EMBL" id="AL031032">
    <property type="protein sequence ID" value="CAA19869.1"/>
    <property type="status" value="ALT_SEQ"/>
    <property type="molecule type" value="Genomic_DNA"/>
</dbReference>
<dbReference type="EMBL" id="AL161584">
    <property type="protein sequence ID" value="CAB80104.1"/>
    <property type="status" value="ALT_SEQ"/>
    <property type="molecule type" value="Genomic_DNA"/>
</dbReference>
<dbReference type="EMBL" id="CP002687">
    <property type="protein sequence ID" value="AEE86286.2"/>
    <property type="molecule type" value="Genomic_DNA"/>
</dbReference>
<dbReference type="RefSeq" id="NP_001320128.1">
    <property type="nucleotide sequence ID" value="NM_001342239.1"/>
</dbReference>
<dbReference type="SMR" id="O81755"/>
<dbReference type="FunCoup" id="O81755">
    <property type="interactions" value="130"/>
</dbReference>
<dbReference type="STRING" id="3702.O81755"/>
<dbReference type="PeroxiBase" id="214">
    <property type="entry name" value="AtPrx48"/>
</dbReference>
<dbReference type="GlyCosmos" id="O81755">
    <property type="glycosylation" value="2 sites, No reported glycans"/>
</dbReference>
<dbReference type="GlyGen" id="O81755">
    <property type="glycosylation" value="3 sites"/>
</dbReference>
<dbReference type="PaxDb" id="3702-AT4G33870.1"/>
<dbReference type="ProteomicsDB" id="236697"/>
<dbReference type="EnsemblPlants" id="AT4G33870.1">
    <property type="protein sequence ID" value="AT4G33870.1"/>
    <property type="gene ID" value="AT4G33870"/>
</dbReference>
<dbReference type="GeneID" id="829530"/>
<dbReference type="Gramene" id="AT4G33870.1">
    <property type="protein sequence ID" value="AT4G33870.1"/>
    <property type="gene ID" value="AT4G33870"/>
</dbReference>
<dbReference type="KEGG" id="ath:AT4G33870"/>
<dbReference type="Araport" id="AT4G33870"/>
<dbReference type="TAIR" id="AT4G33870"/>
<dbReference type="eggNOG" id="ENOG502QSS8">
    <property type="taxonomic scope" value="Eukaryota"/>
</dbReference>
<dbReference type="HOGENOM" id="CLU_010543_0_3_1"/>
<dbReference type="InParanoid" id="O81755"/>
<dbReference type="OMA" id="LKTKCPF"/>
<dbReference type="BioCyc" id="ARA:AT4G33870-MONOMER"/>
<dbReference type="PRO" id="PR:O81755"/>
<dbReference type="Proteomes" id="UP000006548">
    <property type="component" value="Chromosome 4"/>
</dbReference>
<dbReference type="ExpressionAtlas" id="O81755">
    <property type="expression patterns" value="baseline and differential"/>
</dbReference>
<dbReference type="GO" id="GO:0005576">
    <property type="term" value="C:extracellular region"/>
    <property type="evidence" value="ECO:0007669"/>
    <property type="project" value="UniProtKB-SubCell"/>
</dbReference>
<dbReference type="GO" id="GO:0020037">
    <property type="term" value="F:heme binding"/>
    <property type="evidence" value="ECO:0007669"/>
    <property type="project" value="InterPro"/>
</dbReference>
<dbReference type="GO" id="GO:0140825">
    <property type="term" value="F:lactoperoxidase activity"/>
    <property type="evidence" value="ECO:0007669"/>
    <property type="project" value="UniProtKB-EC"/>
</dbReference>
<dbReference type="GO" id="GO:0046872">
    <property type="term" value="F:metal ion binding"/>
    <property type="evidence" value="ECO:0007669"/>
    <property type="project" value="UniProtKB-KW"/>
</dbReference>
<dbReference type="GO" id="GO:0042744">
    <property type="term" value="P:hydrogen peroxide catabolic process"/>
    <property type="evidence" value="ECO:0007669"/>
    <property type="project" value="UniProtKB-KW"/>
</dbReference>
<dbReference type="GO" id="GO:0006979">
    <property type="term" value="P:response to oxidative stress"/>
    <property type="evidence" value="ECO:0007669"/>
    <property type="project" value="InterPro"/>
</dbReference>
<dbReference type="CDD" id="cd00693">
    <property type="entry name" value="secretory_peroxidase"/>
    <property type="match status" value="1"/>
</dbReference>
<dbReference type="FunFam" id="1.10.520.10:FF:000006">
    <property type="entry name" value="Peroxidase"/>
    <property type="match status" value="1"/>
</dbReference>
<dbReference type="Gene3D" id="1.10.520.10">
    <property type="match status" value="1"/>
</dbReference>
<dbReference type="Gene3D" id="1.10.420.10">
    <property type="entry name" value="Peroxidase, domain 2"/>
    <property type="match status" value="1"/>
</dbReference>
<dbReference type="InterPro" id="IPR002016">
    <property type="entry name" value="Haem_peroxidase"/>
</dbReference>
<dbReference type="InterPro" id="IPR010255">
    <property type="entry name" value="Haem_peroxidase_sf"/>
</dbReference>
<dbReference type="InterPro" id="IPR000823">
    <property type="entry name" value="Peroxidase_pln"/>
</dbReference>
<dbReference type="InterPro" id="IPR019794">
    <property type="entry name" value="Peroxidases_AS"/>
</dbReference>
<dbReference type="InterPro" id="IPR033905">
    <property type="entry name" value="Secretory_peroxidase"/>
</dbReference>
<dbReference type="PANTHER" id="PTHR31235">
    <property type="entry name" value="PEROXIDASE 25-RELATED"/>
    <property type="match status" value="1"/>
</dbReference>
<dbReference type="Pfam" id="PF00141">
    <property type="entry name" value="peroxidase"/>
    <property type="match status" value="1"/>
</dbReference>
<dbReference type="PRINTS" id="PR00458">
    <property type="entry name" value="PEROXIDASE"/>
</dbReference>
<dbReference type="PRINTS" id="PR00461">
    <property type="entry name" value="PLPEROXIDASE"/>
</dbReference>
<dbReference type="SUPFAM" id="SSF48113">
    <property type="entry name" value="Heme-dependent peroxidases"/>
    <property type="match status" value="1"/>
</dbReference>
<dbReference type="PROSITE" id="PS00436">
    <property type="entry name" value="PEROXIDASE_2"/>
    <property type="match status" value="1"/>
</dbReference>
<dbReference type="PROSITE" id="PS50873">
    <property type="entry name" value="PEROXIDASE_4"/>
    <property type="match status" value="1"/>
</dbReference>
<organism>
    <name type="scientific">Arabidopsis thaliana</name>
    <name type="common">Mouse-ear cress</name>
    <dbReference type="NCBI Taxonomy" id="3702"/>
    <lineage>
        <taxon>Eukaryota</taxon>
        <taxon>Viridiplantae</taxon>
        <taxon>Streptophyta</taxon>
        <taxon>Embryophyta</taxon>
        <taxon>Tracheophyta</taxon>
        <taxon>Spermatophyta</taxon>
        <taxon>Magnoliopsida</taxon>
        <taxon>eudicotyledons</taxon>
        <taxon>Gunneridae</taxon>
        <taxon>Pentapetalae</taxon>
        <taxon>rosids</taxon>
        <taxon>malvids</taxon>
        <taxon>Brassicales</taxon>
        <taxon>Brassicaceae</taxon>
        <taxon>Camelineae</taxon>
        <taxon>Arabidopsis</taxon>
    </lineage>
</organism>
<name>PER48_ARATH</name>
<comment type="function">
    <text>Removal of H(2)O(2), oxidation of toxic reductants, biosynthesis and degradation of lignin, suberization, auxin catabolism, response to environmental stresses such as wounding, pathogen attack and oxidative stress. These functions might be dependent on each isozyme/isoform in each plant tissue.</text>
</comment>
<comment type="catalytic activity">
    <reaction>
        <text>2 a phenolic donor + H2O2 = 2 a phenolic radical donor + 2 H2O</text>
        <dbReference type="Rhea" id="RHEA:56136"/>
        <dbReference type="ChEBI" id="CHEBI:15377"/>
        <dbReference type="ChEBI" id="CHEBI:16240"/>
        <dbReference type="ChEBI" id="CHEBI:139520"/>
        <dbReference type="ChEBI" id="CHEBI:139521"/>
        <dbReference type="EC" id="1.11.1.7"/>
    </reaction>
</comment>
<comment type="cofactor">
    <cofactor evidence="2">
        <name>heme b</name>
        <dbReference type="ChEBI" id="CHEBI:60344"/>
    </cofactor>
    <text evidence="2">Binds 1 heme b (iron(II)-protoporphyrin IX) group per subunit.</text>
</comment>
<comment type="cofactor">
    <cofactor evidence="2">
        <name>Ca(2+)</name>
        <dbReference type="ChEBI" id="CHEBI:29108"/>
    </cofactor>
    <text evidence="2">Binds 2 calcium ions per subunit.</text>
</comment>
<comment type="subcellular location">
    <subcellularLocation>
        <location evidence="2">Secreted</location>
    </subcellularLocation>
</comment>
<comment type="miscellaneous">
    <text>There are 73 peroxidase genes in A.thaliana.</text>
</comment>
<comment type="similarity">
    <text evidence="2">Belongs to the peroxidase family. Classical plant (class III) peroxidase subfamily.</text>
</comment>
<comment type="sequence caution" evidence="5">
    <conflict type="erroneous gene model prediction">
        <sequence resource="EMBL-CDS" id="CAA19869"/>
    </conflict>
</comment>
<comment type="sequence caution" evidence="5">
    <conflict type="erroneous gene model prediction">
        <sequence resource="EMBL-CDS" id="CAB80104"/>
    </conflict>
</comment>
<reference key="1">
    <citation type="journal article" date="1999" name="Nature">
        <title>Sequence and analysis of chromosome 4 of the plant Arabidopsis thaliana.</title>
        <authorList>
            <person name="Mayer K.F.X."/>
            <person name="Schueller C."/>
            <person name="Wambutt R."/>
            <person name="Murphy G."/>
            <person name="Volckaert G."/>
            <person name="Pohl T."/>
            <person name="Duesterhoeft A."/>
            <person name="Stiekema W."/>
            <person name="Entian K.-D."/>
            <person name="Terryn N."/>
            <person name="Harris B."/>
            <person name="Ansorge W."/>
            <person name="Brandt P."/>
            <person name="Grivell L.A."/>
            <person name="Rieger M."/>
            <person name="Weichselgartner M."/>
            <person name="de Simone V."/>
            <person name="Obermaier B."/>
            <person name="Mache R."/>
            <person name="Mueller M."/>
            <person name="Kreis M."/>
            <person name="Delseny M."/>
            <person name="Puigdomenech P."/>
            <person name="Watson M."/>
            <person name="Schmidtheini T."/>
            <person name="Reichert B."/>
            <person name="Portetelle D."/>
            <person name="Perez-Alonso M."/>
            <person name="Boutry M."/>
            <person name="Bancroft I."/>
            <person name="Vos P."/>
            <person name="Hoheisel J."/>
            <person name="Zimmermann W."/>
            <person name="Wedler H."/>
            <person name="Ridley P."/>
            <person name="Langham S.-A."/>
            <person name="McCullagh B."/>
            <person name="Bilham L."/>
            <person name="Robben J."/>
            <person name="van der Schueren J."/>
            <person name="Grymonprez B."/>
            <person name="Chuang Y.-J."/>
            <person name="Vandenbussche F."/>
            <person name="Braeken M."/>
            <person name="Weltjens I."/>
            <person name="Voet M."/>
            <person name="Bastiaens I."/>
            <person name="Aert R."/>
            <person name="Defoor E."/>
            <person name="Weitzenegger T."/>
            <person name="Bothe G."/>
            <person name="Ramsperger U."/>
            <person name="Hilbert H."/>
            <person name="Braun M."/>
            <person name="Holzer E."/>
            <person name="Brandt A."/>
            <person name="Peters S."/>
            <person name="van Staveren M."/>
            <person name="Dirkse W."/>
            <person name="Mooijman P."/>
            <person name="Klein Lankhorst R."/>
            <person name="Rose M."/>
            <person name="Hauf J."/>
            <person name="Koetter P."/>
            <person name="Berneiser S."/>
            <person name="Hempel S."/>
            <person name="Feldpausch M."/>
            <person name="Lamberth S."/>
            <person name="Van den Daele H."/>
            <person name="De Keyser A."/>
            <person name="Buysshaert C."/>
            <person name="Gielen J."/>
            <person name="Villarroel R."/>
            <person name="De Clercq R."/>
            <person name="van Montagu M."/>
            <person name="Rogers J."/>
            <person name="Cronin A."/>
            <person name="Quail M.A."/>
            <person name="Bray-Allen S."/>
            <person name="Clark L."/>
            <person name="Doggett J."/>
            <person name="Hall S."/>
            <person name="Kay M."/>
            <person name="Lennard N."/>
            <person name="McLay K."/>
            <person name="Mayes R."/>
            <person name="Pettett A."/>
            <person name="Rajandream M.A."/>
            <person name="Lyne M."/>
            <person name="Benes V."/>
            <person name="Rechmann S."/>
            <person name="Borkova D."/>
            <person name="Bloecker H."/>
            <person name="Scharfe M."/>
            <person name="Grimm M."/>
            <person name="Loehnert T.-H."/>
            <person name="Dose S."/>
            <person name="de Haan M."/>
            <person name="Maarse A.C."/>
            <person name="Schaefer M."/>
            <person name="Mueller-Auer S."/>
            <person name="Gabel C."/>
            <person name="Fuchs M."/>
            <person name="Fartmann B."/>
            <person name="Granderath K."/>
            <person name="Dauner D."/>
            <person name="Herzl A."/>
            <person name="Neumann S."/>
            <person name="Argiriou A."/>
            <person name="Vitale D."/>
            <person name="Liguori R."/>
            <person name="Piravandi E."/>
            <person name="Massenet O."/>
            <person name="Quigley F."/>
            <person name="Clabauld G."/>
            <person name="Muendlein A."/>
            <person name="Felber R."/>
            <person name="Schnabl S."/>
            <person name="Hiller R."/>
            <person name="Schmidt W."/>
            <person name="Lecharny A."/>
            <person name="Aubourg S."/>
            <person name="Chefdor F."/>
            <person name="Cooke R."/>
            <person name="Berger C."/>
            <person name="Monfort A."/>
            <person name="Casacuberta E."/>
            <person name="Gibbons T."/>
            <person name="Weber N."/>
            <person name="Vandenbol M."/>
            <person name="Bargues M."/>
            <person name="Terol J."/>
            <person name="Torres A."/>
            <person name="Perez-Perez A."/>
            <person name="Purnelle B."/>
            <person name="Bent E."/>
            <person name="Johnson S."/>
            <person name="Tacon D."/>
            <person name="Jesse T."/>
            <person name="Heijnen L."/>
            <person name="Schwarz S."/>
            <person name="Scholler P."/>
            <person name="Heber S."/>
            <person name="Francs P."/>
            <person name="Bielke C."/>
            <person name="Frishman D."/>
            <person name="Haase D."/>
            <person name="Lemcke K."/>
            <person name="Mewes H.-W."/>
            <person name="Stocker S."/>
            <person name="Zaccaria P."/>
            <person name="Bevan M."/>
            <person name="Wilson R.K."/>
            <person name="de la Bastide M."/>
            <person name="Habermann K."/>
            <person name="Parnell L."/>
            <person name="Dedhia N."/>
            <person name="Gnoj L."/>
            <person name="Schutz K."/>
            <person name="Huang E."/>
            <person name="Spiegel L."/>
            <person name="Sekhon M."/>
            <person name="Murray J."/>
            <person name="Sheet P."/>
            <person name="Cordes M."/>
            <person name="Abu-Threideh J."/>
            <person name="Stoneking T."/>
            <person name="Kalicki J."/>
            <person name="Graves T."/>
            <person name="Harmon G."/>
            <person name="Edwards J."/>
            <person name="Latreille P."/>
            <person name="Courtney L."/>
            <person name="Cloud J."/>
            <person name="Abbott A."/>
            <person name="Scott K."/>
            <person name="Johnson D."/>
            <person name="Minx P."/>
            <person name="Bentley D."/>
            <person name="Fulton B."/>
            <person name="Miller N."/>
            <person name="Greco T."/>
            <person name="Kemp K."/>
            <person name="Kramer J."/>
            <person name="Fulton L."/>
            <person name="Mardis E."/>
            <person name="Dante M."/>
            <person name="Pepin K."/>
            <person name="Hillier L.W."/>
            <person name="Nelson J."/>
            <person name="Spieth J."/>
            <person name="Ryan E."/>
            <person name="Andrews S."/>
            <person name="Geisel C."/>
            <person name="Layman D."/>
            <person name="Du H."/>
            <person name="Ali J."/>
            <person name="Berghoff A."/>
            <person name="Jones K."/>
            <person name="Drone K."/>
            <person name="Cotton M."/>
            <person name="Joshu C."/>
            <person name="Antonoiu B."/>
            <person name="Zidanic M."/>
            <person name="Strong C."/>
            <person name="Sun H."/>
            <person name="Lamar B."/>
            <person name="Yordan C."/>
            <person name="Ma P."/>
            <person name="Zhong J."/>
            <person name="Preston R."/>
            <person name="Vil D."/>
            <person name="Shekher M."/>
            <person name="Matero A."/>
            <person name="Shah R."/>
            <person name="Swaby I.K."/>
            <person name="O'Shaughnessy A."/>
            <person name="Rodriguez M."/>
            <person name="Hoffman J."/>
            <person name="Till S."/>
            <person name="Granat S."/>
            <person name="Shohdy N."/>
            <person name="Hasegawa A."/>
            <person name="Hameed A."/>
            <person name="Lodhi M."/>
            <person name="Johnson A."/>
            <person name="Chen E."/>
            <person name="Marra M.A."/>
            <person name="Martienssen R."/>
            <person name="McCombie W.R."/>
        </authorList>
    </citation>
    <scope>NUCLEOTIDE SEQUENCE [LARGE SCALE GENOMIC DNA]</scope>
    <source>
        <strain>cv. Columbia</strain>
    </source>
</reference>
<reference key="2">
    <citation type="journal article" date="2017" name="Plant J.">
        <title>Araport11: a complete reannotation of the Arabidopsis thaliana reference genome.</title>
        <authorList>
            <person name="Cheng C.Y."/>
            <person name="Krishnakumar V."/>
            <person name="Chan A.P."/>
            <person name="Thibaud-Nissen F."/>
            <person name="Schobel S."/>
            <person name="Town C.D."/>
        </authorList>
    </citation>
    <scope>GENOME REANNOTATION</scope>
    <source>
        <strain>cv. Columbia</strain>
    </source>
</reference>
<reference key="3">
    <citation type="journal article" date="2002" name="Gene">
        <title>Analysis and expression of the class III peroxidase large gene family in Arabidopsis thaliana.</title>
        <authorList>
            <person name="Tognolli M."/>
            <person name="Penel C."/>
            <person name="Greppin H."/>
            <person name="Simon P."/>
        </authorList>
    </citation>
    <scope>GENE FAMILY ORGANIZATION</scope>
    <scope>NOMENCLATURE</scope>
    <source>
        <strain>cv. Columbia</strain>
    </source>
</reference>
<protein>
    <recommendedName>
        <fullName>Putative Peroxidase 48</fullName>
        <shortName>Atperox P48</shortName>
        <ecNumber>1.11.1.7</ecNumber>
    </recommendedName>
</protein>